<feature type="chain" id="PRO_0000186780" description="Endogenous retrovirus group K member 104 Rec protein">
    <location>
        <begin position="1"/>
        <end position="105"/>
    </location>
</feature>
<feature type="region of interest" description="Disordered" evidence="3">
    <location>
        <begin position="1"/>
        <end position="43"/>
    </location>
</feature>
<feature type="short sequence motif" description="Nuclear localization signal" evidence="2">
    <location>
        <begin position="13"/>
        <end position="20"/>
    </location>
</feature>
<feature type="short sequence motif" description="Nuclear export signal" evidence="2">
    <location>
        <begin position="50"/>
        <end position="59"/>
    </location>
</feature>
<feature type="compositionally biased region" description="Basic residues" evidence="3">
    <location>
        <begin position="10"/>
        <end position="19"/>
    </location>
</feature>
<feature type="sequence conflict" description="In Ref. 1; AF164612." evidence="4" ref="1">
    <original>C</original>
    <variation>Y</variation>
    <location>
        <position position="63"/>
    </location>
</feature>
<organism>
    <name type="scientific">Homo sapiens</name>
    <name type="common">Human</name>
    <dbReference type="NCBI Taxonomy" id="9606"/>
    <lineage>
        <taxon>Eukaryota</taxon>
        <taxon>Metazoa</taxon>
        <taxon>Chordata</taxon>
        <taxon>Craniata</taxon>
        <taxon>Vertebrata</taxon>
        <taxon>Euteleostomi</taxon>
        <taxon>Mammalia</taxon>
        <taxon>Eutheria</taxon>
        <taxon>Euarchontoglires</taxon>
        <taxon>Primates</taxon>
        <taxon>Haplorrhini</taxon>
        <taxon>Catarrhini</taxon>
        <taxon>Hominidae</taxon>
        <taxon>Homo</taxon>
    </lineage>
</organism>
<keyword id="KW-0963">Cytoplasm</keyword>
<keyword id="KW-0895">ERV</keyword>
<keyword id="KW-0509">mRNA transport</keyword>
<keyword id="KW-0539">Nucleus</keyword>
<keyword id="KW-1185">Reference proteome</keyword>
<keyword id="KW-0694">RNA-binding</keyword>
<keyword id="KW-0813">Transport</keyword>
<keyword id="KW-0814">Transposable element</keyword>
<dbReference type="EMBL" id="AF164612">
    <property type="status" value="NOT_ANNOTATED_CDS"/>
    <property type="molecule type" value="Genomic_DNA"/>
</dbReference>
<dbReference type="EMBL" id="AC025757">
    <property type="status" value="NOT_ANNOTATED_CDS"/>
    <property type="molecule type" value="Genomic_DNA"/>
</dbReference>
<dbReference type="SMR" id="P61576"/>
<dbReference type="BioMuta" id="HERV-K104"/>
<dbReference type="jPOST" id="P61576"/>
<dbReference type="MassIVE" id="P61576"/>
<dbReference type="PeptideAtlas" id="P61576"/>
<dbReference type="neXtProt" id="NX_P61576"/>
<dbReference type="InParanoid" id="P61576"/>
<dbReference type="PhylomeDB" id="P61576"/>
<dbReference type="Pharos" id="P61576">
    <property type="development level" value="Tdark"/>
</dbReference>
<dbReference type="Proteomes" id="UP000005640">
    <property type="component" value="Unplaced"/>
</dbReference>
<dbReference type="RNAct" id="P61576">
    <property type="molecule type" value="protein"/>
</dbReference>
<dbReference type="GO" id="GO:0005737">
    <property type="term" value="C:cytoplasm"/>
    <property type="evidence" value="ECO:0007669"/>
    <property type="project" value="UniProtKB-SubCell"/>
</dbReference>
<dbReference type="GO" id="GO:0005730">
    <property type="term" value="C:nucleolus"/>
    <property type="evidence" value="ECO:0007669"/>
    <property type="project" value="UniProtKB-SubCell"/>
</dbReference>
<dbReference type="GO" id="GO:0003723">
    <property type="term" value="F:RNA binding"/>
    <property type="evidence" value="ECO:0007669"/>
    <property type="project" value="UniProtKB-KW"/>
</dbReference>
<dbReference type="GO" id="GO:0051028">
    <property type="term" value="P:mRNA transport"/>
    <property type="evidence" value="ECO:0007669"/>
    <property type="project" value="UniProtKB-KW"/>
</dbReference>
<dbReference type="Pfam" id="PF15695">
    <property type="entry name" value="HERV-K_REC"/>
    <property type="match status" value="1"/>
</dbReference>
<gene>
    <name type="primary">HERV-K104</name>
</gene>
<sequence>MNPSEMQRKAPPRRRRHCNRAPLTHKMNKMVTSEEEMKLPSTKKAEPLTWAQLKKLTQLATKCLENTKVTQTPESMLLAALMIVSMVSAGVTNSSKETATIENGP</sequence>
<accession>P61576</accession>
<reference key="1">
    <citation type="journal article" date="1999" name="Curr. Biol.">
        <title>Many human endogenous retrovirus K (HERV-K) proviruses are unique to humans.</title>
        <authorList>
            <person name="Barbulescu M."/>
            <person name="Turner G."/>
            <person name="Seaman M.I."/>
            <person name="Deinard A.S."/>
            <person name="Kidd K.K."/>
            <person name="Lenz J."/>
        </authorList>
    </citation>
    <scope>NUCLEOTIDE SEQUENCE [GENOMIC DNA]</scope>
</reference>
<reference key="2">
    <citation type="journal article" date="2004" name="Nature">
        <title>The DNA sequence and comparative analysis of human chromosome 5.</title>
        <authorList>
            <person name="Schmutz J."/>
            <person name="Martin J."/>
            <person name="Terry A."/>
            <person name="Couronne O."/>
            <person name="Grimwood J."/>
            <person name="Lowry S."/>
            <person name="Gordon L.A."/>
            <person name="Scott D."/>
            <person name="Xie G."/>
            <person name="Huang W."/>
            <person name="Hellsten U."/>
            <person name="Tran-Gyamfi M."/>
            <person name="She X."/>
            <person name="Prabhakar S."/>
            <person name="Aerts A."/>
            <person name="Altherr M."/>
            <person name="Bajorek E."/>
            <person name="Black S."/>
            <person name="Branscomb E."/>
            <person name="Caoile C."/>
            <person name="Challacombe J.F."/>
            <person name="Chan Y.M."/>
            <person name="Denys M."/>
            <person name="Detter J.C."/>
            <person name="Escobar J."/>
            <person name="Flowers D."/>
            <person name="Fotopulos D."/>
            <person name="Glavina T."/>
            <person name="Gomez M."/>
            <person name="Gonzales E."/>
            <person name="Goodstein D."/>
            <person name="Grigoriev I."/>
            <person name="Groza M."/>
            <person name="Hammon N."/>
            <person name="Hawkins T."/>
            <person name="Haydu L."/>
            <person name="Israni S."/>
            <person name="Jett J."/>
            <person name="Kadner K."/>
            <person name="Kimball H."/>
            <person name="Kobayashi A."/>
            <person name="Lopez F."/>
            <person name="Lou Y."/>
            <person name="Martinez D."/>
            <person name="Medina C."/>
            <person name="Morgan J."/>
            <person name="Nandkeshwar R."/>
            <person name="Noonan J.P."/>
            <person name="Pitluck S."/>
            <person name="Pollard M."/>
            <person name="Predki P."/>
            <person name="Priest J."/>
            <person name="Ramirez L."/>
            <person name="Retterer J."/>
            <person name="Rodriguez A."/>
            <person name="Rogers S."/>
            <person name="Salamov A."/>
            <person name="Salazar A."/>
            <person name="Thayer N."/>
            <person name="Tice H."/>
            <person name="Tsai M."/>
            <person name="Ustaszewska A."/>
            <person name="Vo N."/>
            <person name="Wheeler J."/>
            <person name="Wu K."/>
            <person name="Yang J."/>
            <person name="Dickson M."/>
            <person name="Cheng J.-F."/>
            <person name="Eichler E.E."/>
            <person name="Olsen A."/>
            <person name="Pennacchio L.A."/>
            <person name="Rokhsar D.S."/>
            <person name="Richardson P."/>
            <person name="Lucas S.M."/>
            <person name="Myers R.M."/>
            <person name="Rubin E.M."/>
        </authorList>
    </citation>
    <scope>NUCLEOTIDE SEQUENCE [LARGE SCALE GENOMIC DNA]</scope>
</reference>
<reference key="3">
    <citation type="journal article" date="2004" name="Virology">
        <title>Human endogenous retrovirus HERV-K(HML-2) proviruses with Rec protein coding capacity and transcriptional activity.</title>
        <authorList>
            <person name="Mayer J."/>
            <person name="Ehlhardt S."/>
            <person name="Seifert M."/>
            <person name="Sauter M."/>
            <person name="Mueller-Lantzsch N."/>
            <person name="Mehraein Y."/>
            <person name="Zang K.-D."/>
            <person name="Meese E.U."/>
        </authorList>
    </citation>
    <scope>CHARACTERIZATION</scope>
</reference>
<comment type="function">
    <text evidence="1">Retroviral replication requires the nuclear export and translation of unspliced, singly-spliced and multiply-spliced derivatives of the initial genomic transcript. Rec interacts with a highly structured RNA element (RcRE) present in the viral 3'LTR and recruits the cellular nuclear export machinery. This permits export to the cytoplasm of unspliced genomic or incompletely spliced subgenomic viral transcripts (By similarity).</text>
</comment>
<comment type="subunit">
    <text evidence="1">Forms homodimers, homotrimers, and homotetramers via a C-terminal domain. Associates with XPO1 and with ZNF145 (By similarity).</text>
</comment>
<comment type="subcellular location">
    <subcellularLocation>
        <location evidence="1">Cytoplasm</location>
    </subcellularLocation>
    <subcellularLocation>
        <location evidence="1">Nucleus</location>
        <location evidence="1">Nucleolus</location>
    </subcellularLocation>
    <text evidence="1">Shuttles between the nucleus and the cytoplasm. When in the nucleus, resides in the nucleolus (By similarity).</text>
</comment>
<comment type="miscellaneous">
    <text>Despite functional similarity, Rec shares almost no sequence homology with HIV-1 Rev and HTLV-1 Rex.</text>
</comment>
<comment type="miscellaneous">
    <text>This Rec protein is encoded by a human specific provirus.</text>
</comment>
<comment type="miscellaneous">
    <text>HERV-K104 has a type 2 genome. The HERV-K(HML-2) family contains type 1 and type 2 genomes depending on the absence or presence of 292 nucleotides at the 5'-end of the env gene. Rec proteins are translated from a doubly spliced transcript expressed exclusively by HERV-K(HML-2) type 2 proviral genomes. The first exon comprises the 87 N-terminal amino acids of the HERV-K(HMLM-2) type 2 envelope protein. The second exon (18 amino acids) is positioned in the 3' part of the proviral genome.</text>
</comment>
<protein>
    <recommendedName>
        <fullName>Endogenous retrovirus group K member 104 Rec protein</fullName>
    </recommendedName>
    <alternativeName>
        <fullName>HERV-K104 Rec protein</fullName>
    </alternativeName>
    <alternativeName>
        <fullName>HERV-K_5q13.3 provirus Rec protein</fullName>
    </alternativeName>
</protein>
<name>REC04_HUMAN</name>
<evidence type="ECO:0000250" key="1"/>
<evidence type="ECO:0000255" key="2"/>
<evidence type="ECO:0000256" key="3">
    <source>
        <dbReference type="SAM" id="MobiDB-lite"/>
    </source>
</evidence>
<evidence type="ECO:0000305" key="4"/>
<proteinExistence type="evidence at protein level"/>